<keyword id="KW-0002">3D-structure</keyword>
<keyword id="KW-0067">ATP-binding</keyword>
<keyword id="KW-1003">Cell membrane</keyword>
<keyword id="KW-0963">Cytoplasm</keyword>
<keyword id="KW-0418">Kinase</keyword>
<keyword id="KW-0472">Membrane</keyword>
<keyword id="KW-0547">Nucleotide-binding</keyword>
<keyword id="KW-0589">Pheromone response</keyword>
<keyword id="KW-1185">Reference proteome</keyword>
<keyword id="KW-0723">Serine/threonine-protein kinase</keyword>
<keyword id="KW-0808">Transferase</keyword>
<accession>P28829</accession>
<accession>Q7LGJ0</accession>
<name>BYR2_SCHPO</name>
<evidence type="ECO:0000250" key="1">
    <source>
        <dbReference type="UniProtKB" id="O94547"/>
    </source>
</evidence>
<evidence type="ECO:0000255" key="2">
    <source>
        <dbReference type="PROSITE-ProRule" id="PRU00159"/>
    </source>
</evidence>
<evidence type="ECO:0000255" key="3">
    <source>
        <dbReference type="PROSITE-ProRule" id="PRU00184"/>
    </source>
</evidence>
<evidence type="ECO:0000255" key="4">
    <source>
        <dbReference type="PROSITE-ProRule" id="PRU10027"/>
    </source>
</evidence>
<evidence type="ECO:0000256" key="5">
    <source>
        <dbReference type="SAM" id="MobiDB-lite"/>
    </source>
</evidence>
<evidence type="ECO:0000269" key="6">
    <source>
    </source>
</evidence>
<evidence type="ECO:0000269" key="7">
    <source>
    </source>
</evidence>
<evidence type="ECO:0000269" key="8">
    <source>
    </source>
</evidence>
<evidence type="ECO:0000303" key="9">
    <source>
    </source>
</evidence>
<evidence type="ECO:0000303" key="10">
    <source>
    </source>
</evidence>
<evidence type="ECO:0000305" key="11"/>
<evidence type="ECO:0000312" key="12">
    <source>
        <dbReference type="PomBase" id="SPBC1D7.05"/>
    </source>
</evidence>
<evidence type="ECO:0007829" key="13">
    <source>
        <dbReference type="PDB" id="1I35"/>
    </source>
</evidence>
<evidence type="ECO:0007829" key="14">
    <source>
        <dbReference type="PDB" id="1K8R"/>
    </source>
</evidence>
<comment type="function">
    <text evidence="7 8">Serine/threonine protein kinase involved in conjugation and sporulation (PubMed:1435723, PubMed:2046669). It is thought that it phosphorylates the byr1 protein kinase which itself phosphorylate the spk1 kinase (PubMed:1435723, PubMed:2046669).</text>
</comment>
<comment type="catalytic activity">
    <reaction evidence="1">
        <text>L-seryl-[protein] + ATP = O-phospho-L-seryl-[protein] + ADP + H(+)</text>
        <dbReference type="Rhea" id="RHEA:17989"/>
        <dbReference type="Rhea" id="RHEA-COMP:9863"/>
        <dbReference type="Rhea" id="RHEA-COMP:11604"/>
        <dbReference type="ChEBI" id="CHEBI:15378"/>
        <dbReference type="ChEBI" id="CHEBI:29999"/>
        <dbReference type="ChEBI" id="CHEBI:30616"/>
        <dbReference type="ChEBI" id="CHEBI:83421"/>
        <dbReference type="ChEBI" id="CHEBI:456216"/>
        <dbReference type="EC" id="2.7.11.25"/>
    </reaction>
</comment>
<comment type="catalytic activity">
    <reaction evidence="1">
        <text>L-threonyl-[protein] + ATP = O-phospho-L-threonyl-[protein] + ADP + H(+)</text>
        <dbReference type="Rhea" id="RHEA:46608"/>
        <dbReference type="Rhea" id="RHEA-COMP:11060"/>
        <dbReference type="Rhea" id="RHEA-COMP:11605"/>
        <dbReference type="ChEBI" id="CHEBI:15378"/>
        <dbReference type="ChEBI" id="CHEBI:30013"/>
        <dbReference type="ChEBI" id="CHEBI:30616"/>
        <dbReference type="ChEBI" id="CHEBI:61977"/>
        <dbReference type="ChEBI" id="CHEBI:456216"/>
        <dbReference type="EC" id="2.7.11.25"/>
    </reaction>
</comment>
<comment type="subunit">
    <text evidence="6">Interacts with rad24 and rad25; these prevent its translocation to the cell membrane during nitrogen starvation.</text>
</comment>
<comment type="interaction">
    <interactant intactId="EBI-1032333">
        <id>P28829</id>
    </interactant>
    <interactant intactId="EBI-15585264">
        <id>P08647</id>
        <label>ras1</label>
    </interactant>
    <organismsDiffer>false</organismsDiffer>
    <experiments>2</experiments>
</comment>
<comment type="subcellular location">
    <subcellularLocation>
        <location evidence="6">Cytoplasm</location>
    </subcellularLocation>
    <subcellularLocation>
        <location evidence="6">Cell membrane</location>
    </subcellularLocation>
</comment>
<comment type="similarity">
    <text evidence="11">Belongs to the protein kinase superfamily. STE Ser/Thr protein kinase family. MAP kinase kinase kinase subfamily.</text>
</comment>
<proteinExistence type="evidence at protein level"/>
<protein>
    <recommendedName>
        <fullName>Protein kinase byr2</fullName>
        <ecNumber evidence="1">2.7.11.25</ecNumber>
    </recommendedName>
    <alternativeName>
        <fullName>MAPK kinase kinase</fullName>
        <shortName>MAPKKK</shortName>
    </alternativeName>
    <alternativeName>
        <fullName>Protein kinase ste8</fullName>
    </alternativeName>
</protein>
<reference key="1">
    <citation type="journal article" date="1991" name="Mol. Cell. Biol.">
        <title>byr2, a Schizosaccharomyces pombe gene encoding a protein kinase capable of partial suppression of the ras1 mutant phenotype.</title>
        <authorList>
            <person name="Wang Y."/>
            <person name="Xu H.P."/>
            <person name="Riggs M."/>
            <person name="Rodgers L."/>
            <person name="Wigler M."/>
        </authorList>
    </citation>
    <scope>NUCLEOTIDE SEQUENCE [GENOMIC DNA]</scope>
    <scope>FUNCTION</scope>
</reference>
<reference key="2">
    <citation type="journal article" date="1992" name="Mol. Gen. Genet.">
        <title>Functional conservation between Schizosaccharomyces pombe ste8 and Saccharomyces cerevisiae STE11 protein kinases in yeast signal transduction.</title>
        <authorList>
            <person name="Styrkarsdottir U."/>
            <person name="Egel R."/>
            <person name="Nielsen O."/>
        </authorList>
    </citation>
    <scope>NUCLEOTIDE SEQUENCE [GENOMIC DNA]</scope>
    <scope>FUNCTION</scope>
</reference>
<reference key="3">
    <citation type="journal article" date="2002" name="Nature">
        <title>The genome sequence of Schizosaccharomyces pombe.</title>
        <authorList>
            <person name="Wood V."/>
            <person name="Gwilliam R."/>
            <person name="Rajandream M.A."/>
            <person name="Lyne M.H."/>
            <person name="Lyne R."/>
            <person name="Stewart A."/>
            <person name="Sgouros J.G."/>
            <person name="Peat N."/>
            <person name="Hayles J."/>
            <person name="Baker S.G."/>
            <person name="Basham D."/>
            <person name="Bowman S."/>
            <person name="Brooks K."/>
            <person name="Brown D."/>
            <person name="Brown S."/>
            <person name="Chillingworth T."/>
            <person name="Churcher C.M."/>
            <person name="Collins M."/>
            <person name="Connor R."/>
            <person name="Cronin A."/>
            <person name="Davis P."/>
            <person name="Feltwell T."/>
            <person name="Fraser A."/>
            <person name="Gentles S."/>
            <person name="Goble A."/>
            <person name="Hamlin N."/>
            <person name="Harris D.E."/>
            <person name="Hidalgo J."/>
            <person name="Hodgson G."/>
            <person name="Holroyd S."/>
            <person name="Hornsby T."/>
            <person name="Howarth S."/>
            <person name="Huckle E.J."/>
            <person name="Hunt S."/>
            <person name="Jagels K."/>
            <person name="James K.D."/>
            <person name="Jones L."/>
            <person name="Jones M."/>
            <person name="Leather S."/>
            <person name="McDonald S."/>
            <person name="McLean J."/>
            <person name="Mooney P."/>
            <person name="Moule S."/>
            <person name="Mungall K.L."/>
            <person name="Murphy L.D."/>
            <person name="Niblett D."/>
            <person name="Odell C."/>
            <person name="Oliver K."/>
            <person name="O'Neil S."/>
            <person name="Pearson D."/>
            <person name="Quail M.A."/>
            <person name="Rabbinowitsch E."/>
            <person name="Rutherford K.M."/>
            <person name="Rutter S."/>
            <person name="Saunders D."/>
            <person name="Seeger K."/>
            <person name="Sharp S."/>
            <person name="Skelton J."/>
            <person name="Simmonds M.N."/>
            <person name="Squares R."/>
            <person name="Squares S."/>
            <person name="Stevens K."/>
            <person name="Taylor K."/>
            <person name="Taylor R.G."/>
            <person name="Tivey A."/>
            <person name="Walsh S.V."/>
            <person name="Warren T."/>
            <person name="Whitehead S."/>
            <person name="Woodward J.R."/>
            <person name="Volckaert G."/>
            <person name="Aert R."/>
            <person name="Robben J."/>
            <person name="Grymonprez B."/>
            <person name="Weltjens I."/>
            <person name="Vanstreels E."/>
            <person name="Rieger M."/>
            <person name="Schaefer M."/>
            <person name="Mueller-Auer S."/>
            <person name="Gabel C."/>
            <person name="Fuchs M."/>
            <person name="Duesterhoeft A."/>
            <person name="Fritzc C."/>
            <person name="Holzer E."/>
            <person name="Moestl D."/>
            <person name="Hilbert H."/>
            <person name="Borzym K."/>
            <person name="Langer I."/>
            <person name="Beck A."/>
            <person name="Lehrach H."/>
            <person name="Reinhardt R."/>
            <person name="Pohl T.M."/>
            <person name="Eger P."/>
            <person name="Zimmermann W."/>
            <person name="Wedler H."/>
            <person name="Wambutt R."/>
            <person name="Purnelle B."/>
            <person name="Goffeau A."/>
            <person name="Cadieu E."/>
            <person name="Dreano S."/>
            <person name="Gloux S."/>
            <person name="Lelaure V."/>
            <person name="Mottier S."/>
            <person name="Galibert F."/>
            <person name="Aves S.J."/>
            <person name="Xiang Z."/>
            <person name="Hunt C."/>
            <person name="Moore K."/>
            <person name="Hurst S.M."/>
            <person name="Lucas M."/>
            <person name="Rochet M."/>
            <person name="Gaillardin C."/>
            <person name="Tallada V.A."/>
            <person name="Garzon A."/>
            <person name="Thode G."/>
            <person name="Daga R.R."/>
            <person name="Cruzado L."/>
            <person name="Jimenez J."/>
            <person name="Sanchez M."/>
            <person name="del Rey F."/>
            <person name="Benito J."/>
            <person name="Dominguez A."/>
            <person name="Revuelta J.L."/>
            <person name="Moreno S."/>
            <person name="Armstrong J."/>
            <person name="Forsburg S.L."/>
            <person name="Cerutti L."/>
            <person name="Lowe T."/>
            <person name="McCombie W.R."/>
            <person name="Paulsen I."/>
            <person name="Potashkin J."/>
            <person name="Shpakovski G.V."/>
            <person name="Ussery D."/>
            <person name="Barrell B.G."/>
            <person name="Nurse P."/>
        </authorList>
    </citation>
    <scope>NUCLEOTIDE SEQUENCE [LARGE SCALE GENOMIC DNA]</scope>
    <source>
        <strain>972 / ATCC 24843</strain>
    </source>
</reference>
<reference key="4">
    <citation type="journal article" date="2002" name="Mol. Cell. Biol.">
        <title>The 14-3-3 proteins Rad24 and Rad25 negatively regulate Byr2 by affecting its localization in Schizosaccharomyces pombe.</title>
        <authorList>
            <person name="Ozoe F."/>
            <person name="Kurokawa R."/>
            <person name="Kobayashi Y."/>
            <person name="Jeong H.T."/>
            <person name="Tanaka K."/>
            <person name="Sen K."/>
            <person name="Nakagawa T."/>
            <person name="Matsuda H."/>
            <person name="Kawamukai M."/>
        </authorList>
    </citation>
    <scope>INTERACTION WITH RAD24 AND RAD25</scope>
    <scope>SUBCELLULAR LOCATION</scope>
</reference>
<reference key="5">
    <citation type="journal article" date="2001" name="Protein Sci.">
        <title>Overcoming the problems associated with poor spectra quality of the protein kinase Byr2 using residual dipolar couplings.</title>
        <authorList>
            <person name="Gronwald W."/>
            <person name="Brunner E."/>
            <person name="Huber F."/>
            <person name="Wenzler M."/>
            <person name="Herrmann C."/>
            <person name="Kalbitzer H.R."/>
        </authorList>
    </citation>
    <scope>STRUCTURE BY NMR OF 71-165</scope>
</reference>
<reference key="6">
    <citation type="journal article" date="2001" name="Structure">
        <title>The Ras-Byr2RBD complex: structural basis for Ras effector recognition in yeast.</title>
        <authorList>
            <person name="Scheffzek K."/>
            <person name="Grunewald P."/>
            <person name="Wohlgemuth S."/>
            <person name="Kabsch W."/>
            <person name="Tu H."/>
            <person name="Wigler M."/>
            <person name="Wittinghofer A."/>
            <person name="Herrmann C."/>
        </authorList>
    </citation>
    <scope>X-RAY CRYSTALLOGRAPHY (3.0 ANGSTROMS) OF 81-180</scope>
</reference>
<organism>
    <name type="scientific">Schizosaccharomyces pombe (strain 972 / ATCC 24843)</name>
    <name type="common">Fission yeast</name>
    <dbReference type="NCBI Taxonomy" id="284812"/>
    <lineage>
        <taxon>Eukaryota</taxon>
        <taxon>Fungi</taxon>
        <taxon>Dikarya</taxon>
        <taxon>Ascomycota</taxon>
        <taxon>Taphrinomycotina</taxon>
        <taxon>Schizosaccharomycetes</taxon>
        <taxon>Schizosaccharomycetales</taxon>
        <taxon>Schizosaccharomycetaceae</taxon>
        <taxon>Schizosaccharomyces</taxon>
    </lineage>
</organism>
<dbReference type="EC" id="2.7.11.25" evidence="1"/>
<dbReference type="EMBL" id="M74293">
    <property type="protein sequence ID" value="AAA35289.1"/>
    <property type="molecule type" value="Genomic_DNA"/>
</dbReference>
<dbReference type="EMBL" id="X68851">
    <property type="protein sequence ID" value="CAA48731.1"/>
    <property type="molecule type" value="Genomic_DNA"/>
</dbReference>
<dbReference type="EMBL" id="CU329671">
    <property type="protein sequence ID" value="CAB10150.2"/>
    <property type="molecule type" value="Genomic_DNA"/>
</dbReference>
<dbReference type="PIR" id="A39723">
    <property type="entry name" value="A39723"/>
</dbReference>
<dbReference type="RefSeq" id="NP_595714.2">
    <property type="nucleotide sequence ID" value="NM_001021611.3"/>
</dbReference>
<dbReference type="PDB" id="1I35">
    <property type="method" value="NMR"/>
    <property type="chains" value="A=71-165"/>
</dbReference>
<dbReference type="PDB" id="1K8R">
    <property type="method" value="X-ray"/>
    <property type="resolution" value="3.00 A"/>
    <property type="chains" value="B=71-180"/>
</dbReference>
<dbReference type="PDBsum" id="1I35"/>
<dbReference type="PDBsum" id="1K8R"/>
<dbReference type="BMRB" id="P28829"/>
<dbReference type="SMR" id="P28829"/>
<dbReference type="BioGRID" id="277138">
    <property type="interactions" value="51"/>
</dbReference>
<dbReference type="DIP" id="DIP-136N"/>
<dbReference type="FunCoup" id="P28829">
    <property type="interactions" value="99"/>
</dbReference>
<dbReference type="IntAct" id="P28829">
    <property type="interactions" value="4"/>
</dbReference>
<dbReference type="MINT" id="P28829"/>
<dbReference type="STRING" id="284812.P28829"/>
<dbReference type="PaxDb" id="4896-SPBC1D7.05.1"/>
<dbReference type="EnsemblFungi" id="SPBC1D7.05.1">
    <property type="protein sequence ID" value="SPBC1D7.05.1:pep"/>
    <property type="gene ID" value="SPBC1D7.05"/>
</dbReference>
<dbReference type="GeneID" id="2540612"/>
<dbReference type="KEGG" id="spo:2540612"/>
<dbReference type="PomBase" id="SPBC1D7.05">
    <property type="gene designation" value="byr2"/>
</dbReference>
<dbReference type="VEuPathDB" id="FungiDB:SPBC1D7.05"/>
<dbReference type="eggNOG" id="KOG0198">
    <property type="taxonomic scope" value="Eukaryota"/>
</dbReference>
<dbReference type="HOGENOM" id="CLU_003051_2_0_1"/>
<dbReference type="InParanoid" id="P28829"/>
<dbReference type="OMA" id="SSFWMAP"/>
<dbReference type="PhylomeDB" id="P28829"/>
<dbReference type="BRENDA" id="2.7.11.25">
    <property type="organism ID" value="5613"/>
</dbReference>
<dbReference type="Reactome" id="R-SPO-2559580">
    <property type="pathway name" value="Oxidative Stress Induced Senescence"/>
</dbReference>
<dbReference type="EvolutionaryTrace" id="P28829"/>
<dbReference type="PRO" id="PR:P28829"/>
<dbReference type="Proteomes" id="UP000002485">
    <property type="component" value="Chromosome II"/>
</dbReference>
<dbReference type="GO" id="GO:0032153">
    <property type="term" value="C:cell division site"/>
    <property type="evidence" value="ECO:0000314"/>
    <property type="project" value="PomBase"/>
</dbReference>
<dbReference type="GO" id="GO:0051286">
    <property type="term" value="C:cell tip"/>
    <property type="evidence" value="ECO:0000314"/>
    <property type="project" value="PomBase"/>
</dbReference>
<dbReference type="GO" id="GO:0005737">
    <property type="term" value="C:cytoplasm"/>
    <property type="evidence" value="ECO:0000314"/>
    <property type="project" value="PomBase"/>
</dbReference>
<dbReference type="GO" id="GO:0000935">
    <property type="term" value="C:division septum"/>
    <property type="evidence" value="ECO:0000314"/>
    <property type="project" value="PomBase"/>
</dbReference>
<dbReference type="GO" id="GO:0005886">
    <property type="term" value="C:plasma membrane"/>
    <property type="evidence" value="ECO:0000314"/>
    <property type="project" value="PomBase"/>
</dbReference>
<dbReference type="GO" id="GO:0005524">
    <property type="term" value="F:ATP binding"/>
    <property type="evidence" value="ECO:0007669"/>
    <property type="project" value="UniProtKB-KW"/>
</dbReference>
<dbReference type="GO" id="GO:0004709">
    <property type="term" value="F:MAP kinase kinase kinase activity"/>
    <property type="evidence" value="ECO:0000315"/>
    <property type="project" value="PomBase"/>
</dbReference>
<dbReference type="GO" id="GO:0004672">
    <property type="term" value="F:protein kinase activity"/>
    <property type="evidence" value="ECO:0000318"/>
    <property type="project" value="GO_Central"/>
</dbReference>
<dbReference type="GO" id="GO:0106310">
    <property type="term" value="F:protein serine kinase activity"/>
    <property type="evidence" value="ECO:0007669"/>
    <property type="project" value="RHEA"/>
</dbReference>
<dbReference type="GO" id="GO:0010514">
    <property type="term" value="P:induction of conjugation with cellular fusion"/>
    <property type="evidence" value="ECO:0000315"/>
    <property type="project" value="PomBase"/>
</dbReference>
<dbReference type="GO" id="GO:0007254">
    <property type="term" value="P:JNK cascade"/>
    <property type="evidence" value="ECO:0000318"/>
    <property type="project" value="GO_Central"/>
</dbReference>
<dbReference type="GO" id="GO:0038066">
    <property type="term" value="P:p38MAPK cascade"/>
    <property type="evidence" value="ECO:0000318"/>
    <property type="project" value="GO_Central"/>
</dbReference>
<dbReference type="GO" id="GO:0071507">
    <property type="term" value="P:pheromone response MAPK cascade"/>
    <property type="evidence" value="ECO:0000315"/>
    <property type="project" value="PomBase"/>
</dbReference>
<dbReference type="CDD" id="cd09487">
    <property type="entry name" value="SAM_superfamily"/>
    <property type="match status" value="1"/>
</dbReference>
<dbReference type="FunFam" id="1.10.150.50:FF:000133">
    <property type="entry name" value="Predicted protein"/>
    <property type="match status" value="1"/>
</dbReference>
<dbReference type="FunFam" id="1.10.510.10:FF:000334">
    <property type="entry name" value="Serine/threonine-protein kinase STE11"/>
    <property type="match status" value="1"/>
</dbReference>
<dbReference type="FunFam" id="3.30.200.20:FF:000387">
    <property type="entry name" value="Serine/threonine-protein kinase STE11"/>
    <property type="match status" value="1"/>
</dbReference>
<dbReference type="Gene3D" id="3.10.20.90">
    <property type="entry name" value="Phosphatidylinositol 3-kinase Catalytic Subunit, Chain A, domain 1"/>
    <property type="match status" value="1"/>
</dbReference>
<dbReference type="Gene3D" id="1.10.150.50">
    <property type="entry name" value="Transcription Factor, Ets-1"/>
    <property type="match status" value="1"/>
</dbReference>
<dbReference type="Gene3D" id="1.10.510.10">
    <property type="entry name" value="Transferase(Phosphotransferase) domain 1"/>
    <property type="match status" value="1"/>
</dbReference>
<dbReference type="InterPro" id="IPR011009">
    <property type="entry name" value="Kinase-like_dom_sf"/>
</dbReference>
<dbReference type="InterPro" id="IPR000719">
    <property type="entry name" value="Prot_kinase_dom"/>
</dbReference>
<dbReference type="InterPro" id="IPR017441">
    <property type="entry name" value="Protein_kinase_ATP_BS"/>
</dbReference>
<dbReference type="InterPro" id="IPR029458">
    <property type="entry name" value="Ras-bd_By2"/>
</dbReference>
<dbReference type="InterPro" id="IPR001660">
    <property type="entry name" value="SAM"/>
</dbReference>
<dbReference type="InterPro" id="IPR013761">
    <property type="entry name" value="SAM/pointed_sf"/>
</dbReference>
<dbReference type="InterPro" id="IPR008271">
    <property type="entry name" value="Ser/Thr_kinase_AS"/>
</dbReference>
<dbReference type="InterPro" id="IPR029071">
    <property type="entry name" value="Ubiquitin-like_domsf"/>
</dbReference>
<dbReference type="PANTHER" id="PTHR11584:SF369">
    <property type="entry name" value="MITOGEN-ACTIVATED PROTEIN KINASE KINASE KINASE 19-RELATED"/>
    <property type="match status" value="1"/>
</dbReference>
<dbReference type="PANTHER" id="PTHR11584">
    <property type="entry name" value="SERINE/THREONINE PROTEIN KINASE"/>
    <property type="match status" value="1"/>
</dbReference>
<dbReference type="Pfam" id="PF00069">
    <property type="entry name" value="Pkinase"/>
    <property type="match status" value="1"/>
</dbReference>
<dbReference type="Pfam" id="PF07647">
    <property type="entry name" value="SAM_2"/>
    <property type="match status" value="1"/>
</dbReference>
<dbReference type="SMART" id="SM01304">
    <property type="entry name" value="Ras_bdg_2"/>
    <property type="match status" value="1"/>
</dbReference>
<dbReference type="SMART" id="SM00220">
    <property type="entry name" value="S_TKc"/>
    <property type="match status" value="1"/>
</dbReference>
<dbReference type="SMART" id="SM00454">
    <property type="entry name" value="SAM"/>
    <property type="match status" value="1"/>
</dbReference>
<dbReference type="SUPFAM" id="SSF56112">
    <property type="entry name" value="Protein kinase-like (PK-like)"/>
    <property type="match status" value="1"/>
</dbReference>
<dbReference type="SUPFAM" id="SSF47769">
    <property type="entry name" value="SAM/Pointed domain"/>
    <property type="match status" value="1"/>
</dbReference>
<dbReference type="SUPFAM" id="SSF54236">
    <property type="entry name" value="Ubiquitin-like"/>
    <property type="match status" value="1"/>
</dbReference>
<dbReference type="PROSITE" id="PS00107">
    <property type="entry name" value="PROTEIN_KINASE_ATP"/>
    <property type="match status" value="1"/>
</dbReference>
<dbReference type="PROSITE" id="PS50011">
    <property type="entry name" value="PROTEIN_KINASE_DOM"/>
    <property type="match status" value="1"/>
</dbReference>
<dbReference type="PROSITE" id="PS00108">
    <property type="entry name" value="PROTEIN_KINASE_ST"/>
    <property type="match status" value="1"/>
</dbReference>
<dbReference type="PROSITE" id="PS50105">
    <property type="entry name" value="SAM_DOMAIN"/>
    <property type="match status" value="1"/>
</dbReference>
<gene>
    <name evidence="10 12" type="primary">byr2</name>
    <name evidence="9" type="synonym">ste8</name>
    <name evidence="12" type="ORF">SPBC1D7.05</name>
    <name type="ORF">SPBC2F12.01</name>
</gene>
<sequence length="659" mass="73633">MEYYTSKEVAEWLKSIGLEKYIEQFSQNNIEGRHLNHLTLPLLKDLGIENTAKGKQFLKQRDYLREFPRPCILRFIACNGQTRAVQSRGDYQKTLAIALKKFSLEDASKFIVCVSQSSRIKLITEEEFKQICFNSSSPERDRLIIVPKEKPCPSFEDLRRSWEIELAQPAALSSQSSLSPKLSSVLPTSTQKRSVRSNNAKPFESYQRPPSELINSRISDFFPDHQPKLLEKTISNSLRRNLSIRTSQGHNLGNFGQEILPRSSRRARPSELVCPLSSLRISVAEDVNRLPRIDRGFDPPLTVSSTQRISRPPSLQKSITMVGVEPLYQSNGNEKSSKYNVFSESAHGNHQVLSFSPGSSPSFIEQPSPISPTSTTSEDTNTLEEDTDDQSIKWIRGALIGSGSFGQVYLGMNASSGELMAVKQVILDSVSESKDRHAKLLDALAGEIALLQELSHEHIVQYLGSNLNSDHLNIFLEYVPGGSVAGLLTMYGSFEETLVKNFIKQTLKGLEYLHSRGIVHRDIKGANILVDNKGKIKISDFGISKKLELNSTSTKTGGARPSFQGSSFWMAPEVVKQTMHTEKTDIWSLGCLVIEMLTSKHPYPNCDQMQAIFRIGENILPEFPSNISSSAIDFLEKTFAIDCNLRPTASELLSHPFVS</sequence>
<feature type="chain" id="PRO_0000085689" description="Protein kinase byr2">
    <location>
        <begin position="1"/>
        <end position="659"/>
    </location>
</feature>
<feature type="domain" description="SAM" evidence="3">
    <location>
        <begin position="4"/>
        <end position="67"/>
    </location>
</feature>
<feature type="domain" description="Protein kinase" evidence="2">
    <location>
        <begin position="394"/>
        <end position="658"/>
    </location>
</feature>
<feature type="region of interest" description="Disordered" evidence="5">
    <location>
        <begin position="180"/>
        <end position="209"/>
    </location>
</feature>
<feature type="region of interest" description="Disordered" evidence="5">
    <location>
        <begin position="354"/>
        <end position="387"/>
    </location>
</feature>
<feature type="compositionally biased region" description="Low complexity" evidence="5">
    <location>
        <begin position="180"/>
        <end position="190"/>
    </location>
</feature>
<feature type="compositionally biased region" description="Polar residues" evidence="5">
    <location>
        <begin position="354"/>
        <end position="365"/>
    </location>
</feature>
<feature type="compositionally biased region" description="Low complexity" evidence="5">
    <location>
        <begin position="367"/>
        <end position="380"/>
    </location>
</feature>
<feature type="active site" description="Proton acceptor" evidence="2 4">
    <location>
        <position position="522"/>
    </location>
</feature>
<feature type="binding site" evidence="2">
    <location>
        <begin position="400"/>
        <end position="408"/>
    </location>
    <ligand>
        <name>ATP</name>
        <dbReference type="ChEBI" id="CHEBI:30616"/>
    </ligand>
</feature>
<feature type="binding site" evidence="2">
    <location>
        <position position="423"/>
    </location>
    <ligand>
        <name>ATP</name>
        <dbReference type="ChEBI" id="CHEBI:30616"/>
    </ligand>
</feature>
<feature type="strand" evidence="14">
    <location>
        <begin position="72"/>
        <end position="76"/>
    </location>
</feature>
<feature type="turn" evidence="13">
    <location>
        <begin position="78"/>
        <end position="80"/>
    </location>
</feature>
<feature type="strand" evidence="14">
    <location>
        <begin position="82"/>
        <end position="86"/>
    </location>
</feature>
<feature type="helix" evidence="14">
    <location>
        <begin position="91"/>
        <end position="102"/>
    </location>
</feature>
<feature type="strand" evidence="14">
    <location>
        <begin position="109"/>
        <end position="115"/>
    </location>
</feature>
<feature type="strand" evidence="14">
    <location>
        <begin position="117"/>
        <end position="122"/>
    </location>
</feature>
<feature type="helix" evidence="13">
    <location>
        <begin position="127"/>
        <end position="133"/>
    </location>
</feature>
<feature type="strand" evidence="13">
    <location>
        <begin position="138"/>
        <end position="140"/>
    </location>
</feature>
<feature type="strand" evidence="14">
    <location>
        <begin position="143"/>
        <end position="150"/>
    </location>
</feature>
<feature type="helix" evidence="14">
    <location>
        <begin position="155"/>
        <end position="160"/>
    </location>
</feature>